<comment type="function">
    <text evidence="1">Part of the energy-coupling factor (ECF) transporter complex CbiMNOQ involved in cobalt import.</text>
</comment>
<comment type="pathway">
    <text evidence="1">Cofactor biosynthesis; adenosylcobalamin biosynthesis.</text>
</comment>
<comment type="subunit">
    <text evidence="1">Forms an energy-coupling factor (ECF) transporter complex composed of an ATP-binding protein (A component, CbiO), a transmembrane protein (T component, CbiQ) and 2 possible substrate-capture proteins (S components, CbiM and CbiN) of unknown stoichimetry.</text>
</comment>
<comment type="subcellular location">
    <subcellularLocation>
        <location evidence="1">Cell membrane</location>
        <topology evidence="1">Multi-pass membrane protein</topology>
    </subcellularLocation>
</comment>
<comment type="similarity">
    <text evidence="1">Belongs to the CbiM family.</text>
</comment>
<accession>D5WSC8</accession>
<proteinExistence type="inferred from homology"/>
<sequence>MVGWGVLILLMVLWLPRQAYAMHIMEGYLPLGWCLFWAALCLPALILGTRSLQKQVGDNLRMKLVLALSAAFAFVLSALKLPSVTGSSSHPTGVGLGAVLFGPMAMSVVGCIILLFQALLLAHGGITTLGANTFSMAVVGPTVSYVVFRIFQKSGFGRGVAVFLAAALGDLSTYLTTSLQLALAFPAPIGGVASSFWKFASIFAVTQVPLAVSEGLLTVIMVNWVMKYSPEVLSRAMNLPEEGHHEA</sequence>
<evidence type="ECO:0000255" key="1">
    <source>
        <dbReference type="HAMAP-Rule" id="MF_01462"/>
    </source>
</evidence>
<reference key="1">
    <citation type="submission" date="2010-04" db="EMBL/GenBank/DDBJ databases">
        <title>The complete genome of Bacillus tusciae DSM 2912.</title>
        <authorList>
            <consortium name="US DOE Joint Genome Institute (JGI-PGF)"/>
            <person name="Lucas S."/>
            <person name="Copeland A."/>
            <person name="Lapidus A."/>
            <person name="Glavina del Rio T."/>
            <person name="Dalin E."/>
            <person name="Tice H."/>
            <person name="Bruce D."/>
            <person name="Goodwin L."/>
            <person name="Pitluck S."/>
            <person name="Kyrpides N."/>
            <person name="Mavromatis K."/>
            <person name="Ivanova N."/>
            <person name="Ovchinnikova G."/>
            <person name="Chertkov O."/>
            <person name="Brettin T."/>
            <person name="Detter J.C."/>
            <person name="Han C."/>
            <person name="Larimer F."/>
            <person name="Land M."/>
            <person name="Hauser L."/>
            <person name="Markowitz V."/>
            <person name="Cheng J.-F."/>
            <person name="Hugenholtz P."/>
            <person name="Woyke T."/>
            <person name="Wu D."/>
            <person name="Pukall R."/>
            <person name="Schneider S."/>
            <person name="Wahrenburg C."/>
            <person name="Klenk H.-P."/>
            <person name="Eisen J.A."/>
        </authorList>
    </citation>
    <scope>NUCLEOTIDE SEQUENCE [LARGE SCALE GENOMIC DNA]</scope>
    <source>
        <strain>DSM 2912 / NBRC 15312 / T2</strain>
    </source>
</reference>
<organism>
    <name type="scientific">Kyrpidia tusciae (strain DSM 2912 / NBRC 15312 / T2)</name>
    <name type="common">Bacillus tusciae</name>
    <dbReference type="NCBI Taxonomy" id="562970"/>
    <lineage>
        <taxon>Bacteria</taxon>
        <taxon>Bacillati</taxon>
        <taxon>Bacillota</taxon>
        <taxon>Bacilli</taxon>
        <taxon>Bacillales</taxon>
        <taxon>Alicyclobacillaceae</taxon>
        <taxon>Kyrpidia</taxon>
    </lineage>
</organism>
<protein>
    <recommendedName>
        <fullName evidence="1">Cobalt transport protein CbiM</fullName>
    </recommendedName>
    <alternativeName>
        <fullName evidence="1">Energy-coupling factor transporter probable substrate-capture protein CbiM</fullName>
        <shortName evidence="1">ECF transporter S component CbiM</shortName>
    </alternativeName>
</protein>
<gene>
    <name evidence="1" type="primary">cbiM</name>
    <name type="ordered locus">Btus_0236</name>
</gene>
<feature type="signal peptide" evidence="1">
    <location>
        <begin position="1"/>
        <end position="21"/>
    </location>
</feature>
<feature type="chain" id="PRO_0000411136" description="Cobalt transport protein CbiM">
    <location>
        <begin position="22"/>
        <end position="247"/>
    </location>
</feature>
<feature type="transmembrane region" description="Helical" evidence="1">
    <location>
        <begin position="27"/>
        <end position="47"/>
    </location>
</feature>
<feature type="transmembrane region" description="Helical" evidence="1">
    <location>
        <begin position="64"/>
        <end position="84"/>
    </location>
</feature>
<feature type="transmembrane region" description="Helical" evidence="1">
    <location>
        <begin position="96"/>
        <end position="116"/>
    </location>
</feature>
<feature type="transmembrane region" description="Helical" evidence="1">
    <location>
        <begin position="119"/>
        <end position="139"/>
    </location>
</feature>
<feature type="transmembrane region" description="Helical" evidence="1">
    <location>
        <begin position="159"/>
        <end position="179"/>
    </location>
</feature>
<feature type="transmembrane region" description="Helical" evidence="1">
    <location>
        <begin position="181"/>
        <end position="201"/>
    </location>
</feature>
<feature type="transmembrane region" description="Helical" evidence="1">
    <location>
        <begin position="202"/>
        <end position="222"/>
    </location>
</feature>
<name>CBIM_KYRT2</name>
<keyword id="KW-1003">Cell membrane</keyword>
<keyword id="KW-0169">Cobalamin biosynthesis</keyword>
<keyword id="KW-0170">Cobalt</keyword>
<keyword id="KW-0171">Cobalt transport</keyword>
<keyword id="KW-0406">Ion transport</keyword>
<keyword id="KW-0472">Membrane</keyword>
<keyword id="KW-0732">Signal</keyword>
<keyword id="KW-0812">Transmembrane</keyword>
<keyword id="KW-1133">Transmembrane helix</keyword>
<keyword id="KW-0813">Transport</keyword>
<dbReference type="EMBL" id="CP002017">
    <property type="protein sequence ID" value="ADG05013.1"/>
    <property type="molecule type" value="Genomic_DNA"/>
</dbReference>
<dbReference type="RefSeq" id="WP_013074306.1">
    <property type="nucleotide sequence ID" value="NC_014098.1"/>
</dbReference>
<dbReference type="SMR" id="D5WSC8"/>
<dbReference type="STRING" id="562970.Btus_0236"/>
<dbReference type="KEGG" id="bts:Btus_0236"/>
<dbReference type="eggNOG" id="COG0310">
    <property type="taxonomic scope" value="Bacteria"/>
</dbReference>
<dbReference type="HOGENOM" id="CLU_052508_3_0_9"/>
<dbReference type="OrthoDB" id="9809846at2"/>
<dbReference type="UniPathway" id="UPA00148"/>
<dbReference type="Proteomes" id="UP000002368">
    <property type="component" value="Chromosome"/>
</dbReference>
<dbReference type="GO" id="GO:0043190">
    <property type="term" value="C:ATP-binding cassette (ABC) transporter complex"/>
    <property type="evidence" value="ECO:0007669"/>
    <property type="project" value="InterPro"/>
</dbReference>
<dbReference type="GO" id="GO:0015087">
    <property type="term" value="F:cobalt ion transmembrane transporter activity"/>
    <property type="evidence" value="ECO:0007669"/>
    <property type="project" value="UniProtKB-UniRule"/>
</dbReference>
<dbReference type="GO" id="GO:0009236">
    <property type="term" value="P:cobalamin biosynthetic process"/>
    <property type="evidence" value="ECO:0007669"/>
    <property type="project" value="UniProtKB-UniRule"/>
</dbReference>
<dbReference type="FunFam" id="1.10.1760.20:FF:000001">
    <property type="entry name" value="Cobalt transport protein CbiM"/>
    <property type="match status" value="1"/>
</dbReference>
<dbReference type="Gene3D" id="1.10.1760.20">
    <property type="match status" value="1"/>
</dbReference>
<dbReference type="HAMAP" id="MF_01462">
    <property type="entry name" value="CbiM"/>
    <property type="match status" value="1"/>
</dbReference>
<dbReference type="InterPro" id="IPR018024">
    <property type="entry name" value="CbiM"/>
</dbReference>
<dbReference type="InterPro" id="IPR002751">
    <property type="entry name" value="CbiM/NikMN"/>
</dbReference>
<dbReference type="NCBIfam" id="TIGR00123">
    <property type="entry name" value="cbiM"/>
    <property type="match status" value="1"/>
</dbReference>
<dbReference type="NCBIfam" id="NF006184">
    <property type="entry name" value="PRK08319.1"/>
    <property type="match status" value="1"/>
</dbReference>
<dbReference type="PANTHER" id="PTHR43627">
    <property type="match status" value="1"/>
</dbReference>
<dbReference type="PANTHER" id="PTHR43627:SF1">
    <property type="entry name" value="COBALT TRANSPORT PROTEIN CBIM"/>
    <property type="match status" value="1"/>
</dbReference>
<dbReference type="Pfam" id="PF01891">
    <property type="entry name" value="CbiM"/>
    <property type="match status" value="1"/>
</dbReference>